<name>RL9_POLSJ</name>
<organism>
    <name type="scientific">Polaromonas sp. (strain JS666 / ATCC BAA-500)</name>
    <dbReference type="NCBI Taxonomy" id="296591"/>
    <lineage>
        <taxon>Bacteria</taxon>
        <taxon>Pseudomonadati</taxon>
        <taxon>Pseudomonadota</taxon>
        <taxon>Betaproteobacteria</taxon>
        <taxon>Burkholderiales</taxon>
        <taxon>Comamonadaceae</taxon>
        <taxon>Polaromonas</taxon>
    </lineage>
</organism>
<comment type="function">
    <text evidence="1">Binds to the 23S rRNA.</text>
</comment>
<comment type="similarity">
    <text evidence="1">Belongs to the bacterial ribosomal protein bL9 family.</text>
</comment>
<gene>
    <name evidence="1" type="primary">rplI</name>
    <name type="ordered locus">Bpro_3034</name>
</gene>
<reference key="1">
    <citation type="journal article" date="2008" name="Appl. Environ. Microbiol.">
        <title>The genome of Polaromonas sp. strain JS666: insights into the evolution of a hydrocarbon- and xenobiotic-degrading bacterium, and features of relevance to biotechnology.</title>
        <authorList>
            <person name="Mattes T.E."/>
            <person name="Alexander A.K."/>
            <person name="Richardson P.M."/>
            <person name="Munk A.C."/>
            <person name="Han C.S."/>
            <person name="Stothard P."/>
            <person name="Coleman N.V."/>
        </authorList>
    </citation>
    <scope>NUCLEOTIDE SEQUENCE [LARGE SCALE GENOMIC DNA]</scope>
    <source>
        <strain>JS666 / ATCC BAA-500</strain>
    </source>
</reference>
<keyword id="KW-1185">Reference proteome</keyword>
<keyword id="KW-0687">Ribonucleoprotein</keyword>
<keyword id="KW-0689">Ribosomal protein</keyword>
<keyword id="KW-0694">RNA-binding</keyword>
<keyword id="KW-0699">rRNA-binding</keyword>
<evidence type="ECO:0000255" key="1">
    <source>
        <dbReference type="HAMAP-Rule" id="MF_00503"/>
    </source>
</evidence>
<evidence type="ECO:0000305" key="2"/>
<accession>Q128U4</accession>
<dbReference type="EMBL" id="CP000316">
    <property type="protein sequence ID" value="ABE44948.1"/>
    <property type="molecule type" value="Genomic_DNA"/>
</dbReference>
<dbReference type="RefSeq" id="WP_011483946.1">
    <property type="nucleotide sequence ID" value="NC_007948.1"/>
</dbReference>
<dbReference type="SMR" id="Q128U4"/>
<dbReference type="STRING" id="296591.Bpro_3034"/>
<dbReference type="KEGG" id="pol:Bpro_3034"/>
<dbReference type="eggNOG" id="COG0359">
    <property type="taxonomic scope" value="Bacteria"/>
</dbReference>
<dbReference type="HOGENOM" id="CLU_078938_4_1_4"/>
<dbReference type="OrthoDB" id="9788336at2"/>
<dbReference type="Proteomes" id="UP000001983">
    <property type="component" value="Chromosome"/>
</dbReference>
<dbReference type="GO" id="GO:1990904">
    <property type="term" value="C:ribonucleoprotein complex"/>
    <property type="evidence" value="ECO:0007669"/>
    <property type="project" value="UniProtKB-KW"/>
</dbReference>
<dbReference type="GO" id="GO:0005840">
    <property type="term" value="C:ribosome"/>
    <property type="evidence" value="ECO:0007669"/>
    <property type="project" value="UniProtKB-KW"/>
</dbReference>
<dbReference type="GO" id="GO:0019843">
    <property type="term" value="F:rRNA binding"/>
    <property type="evidence" value="ECO:0007669"/>
    <property type="project" value="UniProtKB-UniRule"/>
</dbReference>
<dbReference type="GO" id="GO:0003735">
    <property type="term" value="F:structural constituent of ribosome"/>
    <property type="evidence" value="ECO:0007669"/>
    <property type="project" value="InterPro"/>
</dbReference>
<dbReference type="GO" id="GO:0006412">
    <property type="term" value="P:translation"/>
    <property type="evidence" value="ECO:0007669"/>
    <property type="project" value="UniProtKB-UniRule"/>
</dbReference>
<dbReference type="Gene3D" id="3.10.430.100">
    <property type="entry name" value="Ribosomal protein L9, C-terminal domain"/>
    <property type="match status" value="1"/>
</dbReference>
<dbReference type="Gene3D" id="3.40.5.10">
    <property type="entry name" value="Ribosomal protein L9, N-terminal domain"/>
    <property type="match status" value="1"/>
</dbReference>
<dbReference type="HAMAP" id="MF_00503">
    <property type="entry name" value="Ribosomal_bL9"/>
    <property type="match status" value="1"/>
</dbReference>
<dbReference type="InterPro" id="IPR000244">
    <property type="entry name" value="Ribosomal_bL9"/>
</dbReference>
<dbReference type="InterPro" id="IPR009027">
    <property type="entry name" value="Ribosomal_bL9/RNase_H1_N"/>
</dbReference>
<dbReference type="InterPro" id="IPR020594">
    <property type="entry name" value="Ribosomal_bL9_bac/chp"/>
</dbReference>
<dbReference type="InterPro" id="IPR020069">
    <property type="entry name" value="Ribosomal_bL9_C"/>
</dbReference>
<dbReference type="InterPro" id="IPR036791">
    <property type="entry name" value="Ribosomal_bL9_C_sf"/>
</dbReference>
<dbReference type="InterPro" id="IPR020070">
    <property type="entry name" value="Ribosomal_bL9_N"/>
</dbReference>
<dbReference type="InterPro" id="IPR036935">
    <property type="entry name" value="Ribosomal_bL9_N_sf"/>
</dbReference>
<dbReference type="NCBIfam" id="TIGR00158">
    <property type="entry name" value="L9"/>
    <property type="match status" value="1"/>
</dbReference>
<dbReference type="PANTHER" id="PTHR21368">
    <property type="entry name" value="50S RIBOSOMAL PROTEIN L9"/>
    <property type="match status" value="1"/>
</dbReference>
<dbReference type="Pfam" id="PF03948">
    <property type="entry name" value="Ribosomal_L9_C"/>
    <property type="match status" value="1"/>
</dbReference>
<dbReference type="Pfam" id="PF01281">
    <property type="entry name" value="Ribosomal_L9_N"/>
    <property type="match status" value="1"/>
</dbReference>
<dbReference type="SUPFAM" id="SSF55658">
    <property type="entry name" value="L9 N-domain-like"/>
    <property type="match status" value="1"/>
</dbReference>
<dbReference type="SUPFAM" id="SSF55653">
    <property type="entry name" value="Ribosomal protein L9 C-domain"/>
    <property type="match status" value="1"/>
</dbReference>
<dbReference type="PROSITE" id="PS00651">
    <property type="entry name" value="RIBOSOMAL_L9"/>
    <property type="match status" value="1"/>
</dbReference>
<proteinExistence type="inferred from homology"/>
<protein>
    <recommendedName>
        <fullName evidence="1">Large ribosomal subunit protein bL9</fullName>
    </recommendedName>
    <alternativeName>
        <fullName evidence="2">50S ribosomal protein L9</fullName>
    </alternativeName>
</protein>
<sequence>MQIILLDKVVNLGNLGEVVKVKDGYARNFLIPSGRARRATEANKAEFEAKRVELEKAAAAKLAEMQAQGEKLGGTTVKLTQKAGVDGRLFGSVTNHDISAELTKQGFPVLKSQIRMPNGPLKTVGDHAVSVALHTDVAVDITVTVYGETA</sequence>
<feature type="chain" id="PRO_0000258476" description="Large ribosomal subunit protein bL9">
    <location>
        <begin position="1"/>
        <end position="150"/>
    </location>
</feature>